<comment type="function">
    <text evidence="1">Mono-ADP-ribosyltransferase that mediates mono-ADP-ribosylation of target proteins.</text>
</comment>
<comment type="catalytic activity">
    <reaction evidence="1">
        <text>L-aspartyl-[protein] + NAD(+) = 4-O-(ADP-D-ribosyl)-L-aspartyl-[protein] + nicotinamide</text>
        <dbReference type="Rhea" id="RHEA:54424"/>
        <dbReference type="Rhea" id="RHEA-COMP:9867"/>
        <dbReference type="Rhea" id="RHEA-COMP:13832"/>
        <dbReference type="ChEBI" id="CHEBI:17154"/>
        <dbReference type="ChEBI" id="CHEBI:29961"/>
        <dbReference type="ChEBI" id="CHEBI:57540"/>
        <dbReference type="ChEBI" id="CHEBI:138102"/>
    </reaction>
</comment>
<comment type="catalytic activity">
    <reaction evidence="1">
        <text>L-cysteinyl-[protein] + NAD(+) = S-(ADP-D-ribosyl)-L-cysteinyl-[protein] + nicotinamide + H(+)</text>
        <dbReference type="Rhea" id="RHEA:56612"/>
        <dbReference type="Rhea" id="RHEA-COMP:10131"/>
        <dbReference type="Rhea" id="RHEA-COMP:14624"/>
        <dbReference type="ChEBI" id="CHEBI:15378"/>
        <dbReference type="ChEBI" id="CHEBI:17154"/>
        <dbReference type="ChEBI" id="CHEBI:29950"/>
        <dbReference type="ChEBI" id="CHEBI:57540"/>
        <dbReference type="ChEBI" id="CHEBI:140607"/>
    </reaction>
</comment>
<comment type="PTM">
    <text evidence="1">Auto-mono-ADP-ribosylated.</text>
</comment>
<comment type="similarity">
    <text evidence="3">Belongs to the ARTD/PARP family.</text>
</comment>
<keyword id="KW-0013">ADP-ribosylation</keyword>
<keyword id="KW-0328">Glycosyltransferase</keyword>
<keyword id="KW-0520">NAD</keyword>
<keyword id="KW-0548">Nucleotidyltransferase</keyword>
<keyword id="KW-1185">Reference proteome</keyword>
<keyword id="KW-0808">Transferase</keyword>
<organism>
    <name type="scientific">Pongo abelii</name>
    <name type="common">Sumatran orangutan</name>
    <name type="synonym">Pongo pygmaeus abelii</name>
    <dbReference type="NCBI Taxonomy" id="9601"/>
    <lineage>
        <taxon>Eukaryota</taxon>
        <taxon>Metazoa</taxon>
        <taxon>Chordata</taxon>
        <taxon>Craniata</taxon>
        <taxon>Vertebrata</taxon>
        <taxon>Euteleostomi</taxon>
        <taxon>Mammalia</taxon>
        <taxon>Eutheria</taxon>
        <taxon>Euarchontoglires</taxon>
        <taxon>Primates</taxon>
        <taxon>Haplorrhini</taxon>
        <taxon>Catarrhini</taxon>
        <taxon>Hominidae</taxon>
        <taxon>Pongo</taxon>
    </lineage>
</organism>
<name>PARP6_PONAB</name>
<protein>
    <recommendedName>
        <fullName evidence="3">Protein mono-ADP-ribosyltransferase PARP6</fullName>
        <ecNumber evidence="1">2.4.2.-</ecNumber>
    </recommendedName>
    <alternativeName>
        <fullName>ADP-ribosyltransferase diphtheria toxin-like 17</fullName>
        <shortName>ARTD17</shortName>
    </alternativeName>
    <alternativeName>
        <fullName>Poly [ADP-ribose] polymerase 6</fullName>
        <shortName>PARP-6</shortName>
    </alternativeName>
</protein>
<dbReference type="EC" id="2.4.2.-" evidence="1"/>
<dbReference type="EMBL" id="CR857803">
    <property type="protein sequence ID" value="CAH90063.1"/>
    <property type="molecule type" value="mRNA"/>
</dbReference>
<dbReference type="RefSeq" id="NP_001124986.1">
    <property type="nucleotide sequence ID" value="NM_001131514.1"/>
</dbReference>
<dbReference type="SMR" id="Q5RDU4"/>
<dbReference type="FunCoup" id="Q5RDU4">
    <property type="interactions" value="701"/>
</dbReference>
<dbReference type="STRING" id="9601.ENSPPYP00000007500"/>
<dbReference type="GeneID" id="100171860"/>
<dbReference type="KEGG" id="pon:100171860"/>
<dbReference type="CTD" id="56965"/>
<dbReference type="eggNOG" id="ENOG502QPRC">
    <property type="taxonomic scope" value="Eukaryota"/>
</dbReference>
<dbReference type="InParanoid" id="Q5RDU4"/>
<dbReference type="OrthoDB" id="109543at2759"/>
<dbReference type="Proteomes" id="UP000001595">
    <property type="component" value="Unplaced"/>
</dbReference>
<dbReference type="GO" id="GO:0003950">
    <property type="term" value="F:NAD+ poly-ADP-ribosyltransferase activity"/>
    <property type="evidence" value="ECO:0007669"/>
    <property type="project" value="InterPro"/>
</dbReference>
<dbReference type="GO" id="GO:0140806">
    <property type="term" value="F:NAD+-protein-aspartate ADP-ribosyltransferase activity"/>
    <property type="evidence" value="ECO:0000250"/>
    <property type="project" value="UniProtKB"/>
</dbReference>
<dbReference type="GO" id="GO:0140803">
    <property type="term" value="F:NAD+-protein-cysteine ADP-ribosyltransferase activity"/>
    <property type="evidence" value="ECO:0000250"/>
    <property type="project" value="UniProtKB"/>
</dbReference>
<dbReference type="GO" id="GO:0016779">
    <property type="term" value="F:nucleotidyltransferase activity"/>
    <property type="evidence" value="ECO:0007669"/>
    <property type="project" value="UniProtKB-KW"/>
</dbReference>
<dbReference type="GO" id="GO:0070213">
    <property type="term" value="P:protein auto-ADP-ribosylation"/>
    <property type="evidence" value="ECO:0000250"/>
    <property type="project" value="UniProtKB"/>
</dbReference>
<dbReference type="CDD" id="cd01341">
    <property type="entry name" value="ADP_ribosyl"/>
    <property type="match status" value="2"/>
</dbReference>
<dbReference type="FunFam" id="3.90.228.10:FF:000032">
    <property type="entry name" value="Poly [ADP-ribose] polymerase"/>
    <property type="match status" value="1"/>
</dbReference>
<dbReference type="Gene3D" id="3.90.228.10">
    <property type="match status" value="1"/>
</dbReference>
<dbReference type="InterPro" id="IPR051838">
    <property type="entry name" value="ARTD_PARP"/>
</dbReference>
<dbReference type="InterPro" id="IPR012317">
    <property type="entry name" value="Poly(ADP-ribose)pol_cat_dom"/>
</dbReference>
<dbReference type="PANTHER" id="PTHR21328">
    <property type="entry name" value="POLY ADP-RIBOSE POLYMERASE FAMILY, MEMBER PARP"/>
    <property type="match status" value="1"/>
</dbReference>
<dbReference type="Pfam" id="PF00644">
    <property type="entry name" value="PARP"/>
    <property type="match status" value="1"/>
</dbReference>
<dbReference type="SUPFAM" id="SSF56399">
    <property type="entry name" value="ADP-ribosylation"/>
    <property type="match status" value="1"/>
</dbReference>
<dbReference type="PROSITE" id="PS51059">
    <property type="entry name" value="PARP_CATALYTIC"/>
    <property type="match status" value="1"/>
</dbReference>
<sequence>MDIKGQFWNDDDSEGDNESEEFLYGVQGSCAADLYRHPQLDADIEAVKEIYSENSVSIREYGTIDDVDIDLHINISFLDEEVSTAWKVLRTEPIVLRLRFSLSQYLDGPEPSIEVFQPSNKEGFGLGLQLKKILGMFTSQQWKHLSNDFLKTQQEKRHSWLKASGTIKKFRAGLSIFSPIPKSPSFPIIQDSMLKGKLGVPELRVGRLMNRSVSCTMKNPKVEVFGYPPSPQVSGHCKNIPTLEYGFLVQIMKYAEQRIPTLNEYCVVCDEQHVFQNGSMLKPAVCTRELCVFSFYTLGVMSGAAEEVATGAEVVDLLVAMCRAALESPRKSIIFEPYPSVVDPTDPKTLAFNPKKKNYERLQKALDSVMSIREMTQGSYLEIKKQMDKLDPLAHPLLQWIISSNRSHIVKLPLSRLKFMHTSHQFLLLSSPPAKEARFRTAKKLYGSTFAFHGSHIENWHSILRNGLVNASYTKLQLHGAAYGKGIYLSPISSISFGYSGMGKGQHRMPSKDELVQRYNRMNTIPQTRSIQSRFLQSRNLNCIALCEVITSKDLQKHGNIWVCPVSDHVCTRFFFVYEDGQVGDANINTQDPKIQKEIMRVIGTQVYTN</sequence>
<evidence type="ECO:0000250" key="1">
    <source>
        <dbReference type="UniProtKB" id="Q2NL67"/>
    </source>
</evidence>
<evidence type="ECO:0000255" key="2">
    <source>
        <dbReference type="PROSITE-ProRule" id="PRU00397"/>
    </source>
</evidence>
<evidence type="ECO:0000305" key="3"/>
<gene>
    <name evidence="1" type="primary">PARP6</name>
</gene>
<reference key="1">
    <citation type="submission" date="2004-11" db="EMBL/GenBank/DDBJ databases">
        <authorList>
            <consortium name="The German cDNA consortium"/>
        </authorList>
    </citation>
    <scope>NUCLEOTIDE SEQUENCE [LARGE SCALE MRNA]</scope>
    <source>
        <tissue>Brain cortex</tissue>
    </source>
</reference>
<proteinExistence type="evidence at transcript level"/>
<feature type="chain" id="PRO_0000252432" description="Protein mono-ADP-ribosyltransferase PARP6">
    <location>
        <begin position="1"/>
        <end position="610"/>
    </location>
</feature>
<feature type="domain" description="PARP catalytic" evidence="2">
    <location>
        <begin position="374"/>
        <end position="600"/>
    </location>
</feature>
<feature type="modified residue" description="ADP-ribosyl aspartic acid" evidence="1">
    <location>
        <position position="580"/>
    </location>
</feature>
<accession>Q5RDU4</accession>